<proteinExistence type="inferred from homology"/>
<protein>
    <recommendedName>
        <fullName evidence="1">Nucleotide-binding protein FMG_1084</fullName>
    </recommendedName>
</protein>
<reference key="1">
    <citation type="journal article" date="2008" name="DNA Res.">
        <title>Complete genome sequence of Finegoldia magna, an anaerobic opportunistic pathogen.</title>
        <authorList>
            <person name="Goto T."/>
            <person name="Yamashita A."/>
            <person name="Hirakawa H."/>
            <person name="Matsutani M."/>
            <person name="Todo K."/>
            <person name="Ohshima K."/>
            <person name="Toh H."/>
            <person name="Miyamoto K."/>
            <person name="Kuhara S."/>
            <person name="Hattori M."/>
            <person name="Shimizu T."/>
            <person name="Akimoto S."/>
        </authorList>
    </citation>
    <scope>NUCLEOTIDE SEQUENCE [LARGE SCALE GENOMIC DNA]</scope>
    <source>
        <strain>ATCC 29328 / DSM 20472 / WAL 2508</strain>
    </source>
</reference>
<accession>B0S2B2</accession>
<comment type="function">
    <text evidence="1">Displays ATPase and GTPase activities.</text>
</comment>
<comment type="similarity">
    <text evidence="1">Belongs to the RapZ-like family.</text>
</comment>
<evidence type="ECO:0000255" key="1">
    <source>
        <dbReference type="HAMAP-Rule" id="MF_00636"/>
    </source>
</evidence>
<sequence>MEVVIVTGMSGAGKSASSHILEDLGYYTLDNMPPSLLLSFIDLTTKSKKKINKIACVVDIRGGEFFADLMKSITLLKNQSIDVKILYLDASDEILIRRYKEHRRPHPLAINGNISQGISNERELLSEVRNSADSIINTSNLTLGELRRKILYVFSLKDVDTKLAISVVSFGFKHGILLDADLVFDVRFLPNPYYIEELKKSSGLNTDIKDYVFGFDEANEFLDKLVDMVEFLIPKYSKEGKTNLVIGIGCTGGKHRSVAIAQALTARLEGNGEKVYVSHRDQKFW</sequence>
<feature type="chain" id="PRO_1000130759" description="Nucleotide-binding protein FMG_1084">
    <location>
        <begin position="1"/>
        <end position="285"/>
    </location>
</feature>
<feature type="binding site" evidence="1">
    <location>
        <begin position="8"/>
        <end position="15"/>
    </location>
    <ligand>
        <name>ATP</name>
        <dbReference type="ChEBI" id="CHEBI:30616"/>
    </ligand>
</feature>
<feature type="binding site" evidence="1">
    <location>
        <begin position="59"/>
        <end position="62"/>
    </location>
    <ligand>
        <name>GTP</name>
        <dbReference type="ChEBI" id="CHEBI:37565"/>
    </ligand>
</feature>
<dbReference type="EMBL" id="AP008971">
    <property type="protein sequence ID" value="BAG08502.1"/>
    <property type="molecule type" value="Genomic_DNA"/>
</dbReference>
<dbReference type="SMR" id="B0S2B2"/>
<dbReference type="STRING" id="334413.FMG_1084"/>
<dbReference type="KEGG" id="fma:FMG_1084"/>
<dbReference type="eggNOG" id="COG1660">
    <property type="taxonomic scope" value="Bacteria"/>
</dbReference>
<dbReference type="HOGENOM" id="CLU_059558_0_0_9"/>
<dbReference type="Proteomes" id="UP000001319">
    <property type="component" value="Chromosome"/>
</dbReference>
<dbReference type="GO" id="GO:0005524">
    <property type="term" value="F:ATP binding"/>
    <property type="evidence" value="ECO:0007669"/>
    <property type="project" value="UniProtKB-UniRule"/>
</dbReference>
<dbReference type="GO" id="GO:0005525">
    <property type="term" value="F:GTP binding"/>
    <property type="evidence" value="ECO:0007669"/>
    <property type="project" value="UniProtKB-UniRule"/>
</dbReference>
<dbReference type="Gene3D" id="3.40.50.300">
    <property type="entry name" value="P-loop containing nucleotide triphosphate hydrolases"/>
    <property type="match status" value="1"/>
</dbReference>
<dbReference type="HAMAP" id="MF_00636">
    <property type="entry name" value="RapZ_like"/>
    <property type="match status" value="1"/>
</dbReference>
<dbReference type="InterPro" id="IPR027417">
    <property type="entry name" value="P-loop_NTPase"/>
</dbReference>
<dbReference type="InterPro" id="IPR005337">
    <property type="entry name" value="RapZ-like"/>
</dbReference>
<dbReference type="InterPro" id="IPR053930">
    <property type="entry name" value="RapZ-like_N"/>
</dbReference>
<dbReference type="InterPro" id="IPR053931">
    <property type="entry name" value="RapZ_C"/>
</dbReference>
<dbReference type="NCBIfam" id="NF003828">
    <property type="entry name" value="PRK05416.1"/>
    <property type="match status" value="1"/>
</dbReference>
<dbReference type="PANTHER" id="PTHR30448">
    <property type="entry name" value="RNASE ADAPTER PROTEIN RAPZ"/>
    <property type="match status" value="1"/>
</dbReference>
<dbReference type="PANTHER" id="PTHR30448:SF0">
    <property type="entry name" value="RNASE ADAPTER PROTEIN RAPZ"/>
    <property type="match status" value="1"/>
</dbReference>
<dbReference type="Pfam" id="PF22740">
    <property type="entry name" value="PapZ_C"/>
    <property type="match status" value="1"/>
</dbReference>
<dbReference type="Pfam" id="PF03668">
    <property type="entry name" value="RapZ-like_N"/>
    <property type="match status" value="1"/>
</dbReference>
<dbReference type="PIRSF" id="PIRSF005052">
    <property type="entry name" value="P-loopkin"/>
    <property type="match status" value="1"/>
</dbReference>
<dbReference type="SUPFAM" id="SSF52540">
    <property type="entry name" value="P-loop containing nucleoside triphosphate hydrolases"/>
    <property type="match status" value="1"/>
</dbReference>
<gene>
    <name type="ordered locus">FMG_1084</name>
</gene>
<keyword id="KW-0067">ATP-binding</keyword>
<keyword id="KW-0342">GTP-binding</keyword>
<keyword id="KW-0547">Nucleotide-binding</keyword>
<keyword id="KW-1185">Reference proteome</keyword>
<name>Y1084_FINM2</name>
<organism>
    <name type="scientific">Finegoldia magna (strain ATCC 29328 / DSM 20472 / WAL 2508)</name>
    <name type="common">Peptostreptococcus magnus</name>
    <dbReference type="NCBI Taxonomy" id="334413"/>
    <lineage>
        <taxon>Bacteria</taxon>
        <taxon>Bacillati</taxon>
        <taxon>Bacillota</taxon>
        <taxon>Tissierellia</taxon>
        <taxon>Tissierellales</taxon>
        <taxon>Peptoniphilaceae</taxon>
        <taxon>Finegoldia</taxon>
    </lineage>
</organism>